<comment type="similarity">
    <text evidence="1">Belongs to the UPF0325 family.</text>
</comment>
<keyword id="KW-1185">Reference proteome</keyword>
<sequence>MYDNLKSLGITNPEEIDRYSLRQEANNDILKIYFQKDKGEFFAKSVKFKYPRQRKTVVADGVGQGYKEVQEISPNLRYIIDELDQICQRDRSEVDLKRKILDDLRHLESVVTNKISEIEADLEKLTRK</sequence>
<dbReference type="EMBL" id="CU928161">
    <property type="protein sequence ID" value="CAR01539.1"/>
    <property type="molecule type" value="Genomic_DNA"/>
</dbReference>
<dbReference type="RefSeq" id="WP_000272188.1">
    <property type="nucleotide sequence ID" value="NC_011742.1"/>
</dbReference>
<dbReference type="SMR" id="B7MBE6"/>
<dbReference type="KEGG" id="ecz:ECS88_0174"/>
<dbReference type="HOGENOM" id="CLU_136774_0_0_6"/>
<dbReference type="Proteomes" id="UP000000747">
    <property type="component" value="Chromosome"/>
</dbReference>
<dbReference type="HAMAP" id="MF_01519">
    <property type="entry name" value="UPF0325"/>
    <property type="match status" value="1"/>
</dbReference>
<dbReference type="InterPro" id="IPR020911">
    <property type="entry name" value="UPF0325"/>
</dbReference>
<dbReference type="NCBIfam" id="NF010213">
    <property type="entry name" value="PRK13677.1"/>
    <property type="match status" value="1"/>
</dbReference>
<dbReference type="Pfam" id="PF11944">
    <property type="entry name" value="DUF3461"/>
    <property type="match status" value="1"/>
</dbReference>
<proteinExistence type="inferred from homology"/>
<name>YAEH_ECO45</name>
<evidence type="ECO:0000255" key="1">
    <source>
        <dbReference type="HAMAP-Rule" id="MF_01519"/>
    </source>
</evidence>
<feature type="chain" id="PRO_1000198429" description="UPF0325 protein YaeH">
    <location>
        <begin position="1"/>
        <end position="128"/>
    </location>
</feature>
<organism>
    <name type="scientific">Escherichia coli O45:K1 (strain S88 / ExPEC)</name>
    <dbReference type="NCBI Taxonomy" id="585035"/>
    <lineage>
        <taxon>Bacteria</taxon>
        <taxon>Pseudomonadati</taxon>
        <taxon>Pseudomonadota</taxon>
        <taxon>Gammaproteobacteria</taxon>
        <taxon>Enterobacterales</taxon>
        <taxon>Enterobacteriaceae</taxon>
        <taxon>Escherichia</taxon>
    </lineage>
</organism>
<accession>B7MBE6</accession>
<gene>
    <name evidence="1" type="primary">yaeH</name>
    <name type="ordered locus">ECS88_0174</name>
</gene>
<reference key="1">
    <citation type="journal article" date="2009" name="PLoS Genet.">
        <title>Organised genome dynamics in the Escherichia coli species results in highly diverse adaptive paths.</title>
        <authorList>
            <person name="Touchon M."/>
            <person name="Hoede C."/>
            <person name="Tenaillon O."/>
            <person name="Barbe V."/>
            <person name="Baeriswyl S."/>
            <person name="Bidet P."/>
            <person name="Bingen E."/>
            <person name="Bonacorsi S."/>
            <person name="Bouchier C."/>
            <person name="Bouvet O."/>
            <person name="Calteau A."/>
            <person name="Chiapello H."/>
            <person name="Clermont O."/>
            <person name="Cruveiller S."/>
            <person name="Danchin A."/>
            <person name="Diard M."/>
            <person name="Dossat C."/>
            <person name="Karoui M.E."/>
            <person name="Frapy E."/>
            <person name="Garry L."/>
            <person name="Ghigo J.M."/>
            <person name="Gilles A.M."/>
            <person name="Johnson J."/>
            <person name="Le Bouguenec C."/>
            <person name="Lescat M."/>
            <person name="Mangenot S."/>
            <person name="Martinez-Jehanne V."/>
            <person name="Matic I."/>
            <person name="Nassif X."/>
            <person name="Oztas S."/>
            <person name="Petit M.A."/>
            <person name="Pichon C."/>
            <person name="Rouy Z."/>
            <person name="Ruf C.S."/>
            <person name="Schneider D."/>
            <person name="Tourret J."/>
            <person name="Vacherie B."/>
            <person name="Vallenet D."/>
            <person name="Medigue C."/>
            <person name="Rocha E.P.C."/>
            <person name="Denamur E."/>
        </authorList>
    </citation>
    <scope>NUCLEOTIDE SEQUENCE [LARGE SCALE GENOMIC DNA]</scope>
    <source>
        <strain>S88 / ExPEC</strain>
    </source>
</reference>
<protein>
    <recommendedName>
        <fullName evidence="1">UPF0325 protein YaeH</fullName>
    </recommendedName>
</protein>